<protein>
    <recommendedName>
        <fullName>Cytochrome c-553</fullName>
    </recommendedName>
    <alternativeName>
        <fullName>Cytochrome c553</fullName>
    </alternativeName>
</protein>
<reference key="1">
    <citation type="journal article" date="1999" name="Nature">
        <title>Genomic sequence comparison of two unrelated isolates of the human gastric pathogen Helicobacter pylori.</title>
        <authorList>
            <person name="Alm R.A."/>
            <person name="Ling L.-S.L."/>
            <person name="Moir D.T."/>
            <person name="King B.L."/>
            <person name="Brown E.D."/>
            <person name="Doig P.C."/>
            <person name="Smith D.R."/>
            <person name="Noonan B."/>
            <person name="Guild B.C."/>
            <person name="deJonge B.L."/>
            <person name="Carmel G."/>
            <person name="Tummino P.J."/>
            <person name="Caruso A."/>
            <person name="Uria-Nickelsen M."/>
            <person name="Mills D.M."/>
            <person name="Ives C."/>
            <person name="Gibson R."/>
            <person name="Merberg D."/>
            <person name="Mills S.D."/>
            <person name="Jiang Q."/>
            <person name="Taylor D.E."/>
            <person name="Vovis G.F."/>
            <person name="Trust T.J."/>
        </authorList>
    </citation>
    <scope>NUCLEOTIDE SEQUENCE [LARGE SCALE GENOMIC DNA]</scope>
    <source>
        <strain>J99 / ATCC 700824</strain>
    </source>
</reference>
<name>CY553_HELPJ</name>
<evidence type="ECO:0000250" key="1"/>
<evidence type="ECO:0000255" key="2">
    <source>
        <dbReference type="PROSITE-ProRule" id="PRU00433"/>
    </source>
</evidence>
<evidence type="ECO:0000305" key="3"/>
<proteinExistence type="inferred from homology"/>
<accession>Q9ZJZ9</accession>
<dbReference type="EMBL" id="AE001439">
    <property type="protein sequence ID" value="AAD06721.1"/>
    <property type="molecule type" value="Genomic_DNA"/>
</dbReference>
<dbReference type="PIR" id="F71843">
    <property type="entry name" value="F71843"/>
</dbReference>
<dbReference type="RefSeq" id="WP_000756037.1">
    <property type="nucleotide sequence ID" value="NZ_CP011330.1"/>
</dbReference>
<dbReference type="SMR" id="Q9ZJZ9"/>
<dbReference type="KEGG" id="hpj:jhp_1148"/>
<dbReference type="PATRIC" id="fig|85963.30.peg.1428"/>
<dbReference type="eggNOG" id="COG2863">
    <property type="taxonomic scope" value="Bacteria"/>
</dbReference>
<dbReference type="Proteomes" id="UP000000804">
    <property type="component" value="Chromosome"/>
</dbReference>
<dbReference type="GO" id="GO:0042597">
    <property type="term" value="C:periplasmic space"/>
    <property type="evidence" value="ECO:0007669"/>
    <property type="project" value="UniProtKB-SubCell"/>
</dbReference>
<dbReference type="GO" id="GO:0009055">
    <property type="term" value="F:electron transfer activity"/>
    <property type="evidence" value="ECO:0007669"/>
    <property type="project" value="InterPro"/>
</dbReference>
<dbReference type="GO" id="GO:0020037">
    <property type="term" value="F:heme binding"/>
    <property type="evidence" value="ECO:0007669"/>
    <property type="project" value="InterPro"/>
</dbReference>
<dbReference type="GO" id="GO:0005506">
    <property type="term" value="F:iron ion binding"/>
    <property type="evidence" value="ECO:0007669"/>
    <property type="project" value="InterPro"/>
</dbReference>
<dbReference type="Gene3D" id="1.10.760.10">
    <property type="entry name" value="Cytochrome c-like domain"/>
    <property type="match status" value="1"/>
</dbReference>
<dbReference type="InterPro" id="IPR009056">
    <property type="entry name" value="Cyt_c-like_dom"/>
</dbReference>
<dbReference type="InterPro" id="IPR036909">
    <property type="entry name" value="Cyt_c-like_dom_sf"/>
</dbReference>
<dbReference type="InterPro" id="IPR008168">
    <property type="entry name" value="Cyt_C_IC"/>
</dbReference>
<dbReference type="InterPro" id="IPR050597">
    <property type="entry name" value="Cytochrome_c_Oxidase_Subunit"/>
</dbReference>
<dbReference type="PANTHER" id="PTHR33751">
    <property type="entry name" value="CBB3-TYPE CYTOCHROME C OXIDASE SUBUNIT FIXP"/>
    <property type="match status" value="1"/>
</dbReference>
<dbReference type="PANTHER" id="PTHR33751:SF9">
    <property type="entry name" value="CYTOCHROME C4"/>
    <property type="match status" value="1"/>
</dbReference>
<dbReference type="Pfam" id="PF00034">
    <property type="entry name" value="Cytochrom_C"/>
    <property type="match status" value="1"/>
</dbReference>
<dbReference type="PRINTS" id="PR00605">
    <property type="entry name" value="CYTCHROMECIC"/>
</dbReference>
<dbReference type="SUPFAM" id="SSF46626">
    <property type="entry name" value="Cytochrome c"/>
    <property type="match status" value="1"/>
</dbReference>
<dbReference type="PROSITE" id="PS51007">
    <property type="entry name" value="CYTC"/>
    <property type="match status" value="1"/>
</dbReference>
<sequence>MKKVIVALGVLAFANVLMATDVKALVKGCAACHGVKFEKKALGKSKIVNMMSEKEIEEDLMAFKSGANKNPVMTAQAKKLSDEDIKALAKYIPTLK</sequence>
<comment type="function">
    <text>Natural electron acceptor for a formate dehydrogenase.</text>
</comment>
<comment type="subcellular location">
    <subcellularLocation>
        <location>Periplasm</location>
    </subcellularLocation>
</comment>
<comment type="PTM">
    <text>Binds 1 heme c group covalently per subunit.</text>
</comment>
<comment type="similarity">
    <text evidence="3">Belongs to the cytochrome c family.</text>
</comment>
<keyword id="KW-0249">Electron transport</keyword>
<keyword id="KW-0349">Heme</keyword>
<keyword id="KW-0408">Iron</keyword>
<keyword id="KW-0479">Metal-binding</keyword>
<keyword id="KW-0574">Periplasm</keyword>
<keyword id="KW-0732">Signal</keyword>
<keyword id="KW-0813">Transport</keyword>
<gene>
    <name type="ordered locus">jhp_1148</name>
</gene>
<organism>
    <name type="scientific">Helicobacter pylori (strain J99 / ATCC 700824)</name>
    <name type="common">Campylobacter pylori J99</name>
    <dbReference type="NCBI Taxonomy" id="85963"/>
    <lineage>
        <taxon>Bacteria</taxon>
        <taxon>Pseudomonadati</taxon>
        <taxon>Campylobacterota</taxon>
        <taxon>Epsilonproteobacteria</taxon>
        <taxon>Campylobacterales</taxon>
        <taxon>Helicobacteraceae</taxon>
        <taxon>Helicobacter</taxon>
    </lineage>
</organism>
<feature type="signal peptide" evidence="1">
    <location>
        <begin position="1"/>
        <end position="19"/>
    </location>
</feature>
<feature type="chain" id="PRO_0000006538" description="Cytochrome c-553">
    <location>
        <begin position="20"/>
        <end position="96"/>
    </location>
</feature>
<feature type="binding site" description="covalent">
    <location>
        <position position="29"/>
    </location>
    <ligand>
        <name>heme c</name>
        <dbReference type="ChEBI" id="CHEBI:61717"/>
    </ligand>
</feature>
<feature type="binding site" description="covalent">
    <location>
        <position position="32"/>
    </location>
    <ligand>
        <name>heme c</name>
        <dbReference type="ChEBI" id="CHEBI:61717"/>
    </ligand>
</feature>
<feature type="binding site" description="axial binding residue" evidence="2">
    <location>
        <position position="33"/>
    </location>
    <ligand>
        <name>heme c</name>
        <dbReference type="ChEBI" id="CHEBI:61717"/>
    </ligand>
    <ligandPart>
        <name>Fe</name>
        <dbReference type="ChEBI" id="CHEBI:18248"/>
    </ligandPart>
</feature>
<feature type="binding site" description="axial binding residue" evidence="2">
    <location>
        <position position="73"/>
    </location>
    <ligand>
        <name>heme c</name>
        <dbReference type="ChEBI" id="CHEBI:61717"/>
    </ligand>
    <ligandPart>
        <name>Fe</name>
        <dbReference type="ChEBI" id="CHEBI:18248"/>
    </ligandPart>
</feature>